<proteinExistence type="evidence at protein level"/>
<reference key="1">
    <citation type="submission" date="2003-07" db="EMBL/GenBank/DDBJ databases">
        <title>Cloning and expression of a novel human cDNA homology to murine N-terminal asparagine amidohydrolase (Ntan1) mRNA.</title>
        <authorList>
            <person name="Jiang C.L."/>
            <person name="Yu L."/>
            <person name="Fan Y.X."/>
            <person name="Tu Q."/>
            <person name="Jiang J.X."/>
            <person name="Zhao S.Y."/>
        </authorList>
    </citation>
    <scope>NUCLEOTIDE SEQUENCE [MRNA]</scope>
</reference>
<reference key="2">
    <citation type="journal article" date="2004" name="Genome Res.">
        <title>The status, quality, and expansion of the NIH full-length cDNA project: the Mammalian Gene Collection (MGC).</title>
        <authorList>
            <consortium name="The MGC Project Team"/>
        </authorList>
    </citation>
    <scope>NUCLEOTIDE SEQUENCE [LARGE SCALE MRNA]</scope>
    <source>
        <tissue>Skin</tissue>
    </source>
</reference>
<reference key="3">
    <citation type="journal article" date="2011" name="Biochemistry">
        <title>Expression and biochemical characterization of the human enzyme N-terminal asparagine amidohydrolase.</title>
        <authorList>
            <person name="Cantor J.R."/>
            <person name="Stone E.M."/>
            <person name="Georgiou G."/>
        </authorList>
    </citation>
    <scope>FUNCTION</scope>
    <scope>CATALYTIC ACTIVITY</scope>
    <scope>ACTIVITY REGULATION</scope>
    <scope>BIOPHYSICOCHEMICAL PROPERTIES</scope>
    <scope>REMOVAL OF INITIATOR METHIONINE</scope>
    <scope>MUTAGENESIS OF PRO-2 AND CYS-75</scope>
</reference>
<feature type="chain" id="PRO_0000057971" description="Protein N-terminal asparagine amidohydrolase">
    <location>
        <begin position="1"/>
        <end position="310"/>
    </location>
</feature>
<feature type="site" description="Essential for catalytic activity">
    <location>
        <position position="75"/>
    </location>
</feature>
<feature type="sequence variant" id="VAR_051244" description="In dbSNP:rs1136001.">
    <original>H</original>
    <variation>N</variation>
    <location>
        <position position="283"/>
    </location>
</feature>
<feature type="sequence variant" id="VAR_051245" description="In dbSNP:rs1135999.">
    <original>S</original>
    <variation>P</variation>
    <location>
        <position position="287"/>
    </location>
</feature>
<feature type="mutagenesis site" description="3-fold reduction in catalytic activity." evidence="2">
    <original>P</original>
    <variation>G</variation>
    <location>
        <position position="2"/>
    </location>
</feature>
<feature type="mutagenesis site" description="Abolishes catalytic activity." evidence="2">
    <original>C</original>
    <variation>A</variation>
    <variation>S</variation>
    <variation>T</variation>
    <location>
        <position position="75"/>
    </location>
</feature>
<feature type="sequence conflict" description="In Ref. 1; AAP97215." evidence="3" ref="1">
    <original>E</original>
    <variation>D</variation>
    <location>
        <position position="6"/>
    </location>
</feature>
<feature type="sequence conflict" description="In Ref. 1; AAP97215." evidence="3" ref="1">
    <original>Q</original>
    <variation>R</variation>
    <location>
        <position position="14"/>
    </location>
</feature>
<feature type="strand" evidence="4">
    <location>
        <begin position="3"/>
        <end position="5"/>
    </location>
</feature>
<feature type="helix" evidence="4">
    <location>
        <begin position="16"/>
        <end position="22"/>
    </location>
</feature>
<feature type="helix" evidence="4">
    <location>
        <begin position="24"/>
        <end position="35"/>
    </location>
</feature>
<feature type="strand" evidence="4">
    <location>
        <begin position="39"/>
        <end position="41"/>
    </location>
</feature>
<feature type="strand" evidence="4">
    <location>
        <begin position="46"/>
        <end position="48"/>
    </location>
</feature>
<feature type="strand" evidence="4">
    <location>
        <begin position="53"/>
        <end position="57"/>
    </location>
</feature>
<feature type="strand" evidence="4">
    <location>
        <begin position="66"/>
        <end position="69"/>
    </location>
</feature>
<feature type="strand" evidence="4">
    <location>
        <begin position="76"/>
        <end position="82"/>
    </location>
</feature>
<feature type="turn" evidence="4">
    <location>
        <begin position="83"/>
        <end position="85"/>
    </location>
</feature>
<feature type="strand" evidence="4">
    <location>
        <begin position="88"/>
        <end position="93"/>
    </location>
</feature>
<feature type="helix" evidence="4">
    <location>
        <begin position="98"/>
        <end position="110"/>
    </location>
</feature>
<feature type="strand" evidence="4">
    <location>
        <begin position="116"/>
        <end position="118"/>
    </location>
</feature>
<feature type="strand" evidence="4">
    <location>
        <begin position="121"/>
        <end position="127"/>
    </location>
</feature>
<feature type="helix" evidence="4">
    <location>
        <begin position="135"/>
        <end position="148"/>
    </location>
</feature>
<feature type="strand" evidence="4">
    <location>
        <begin position="150"/>
        <end position="152"/>
    </location>
</feature>
<feature type="strand" evidence="4">
    <location>
        <begin position="154"/>
        <end position="161"/>
    </location>
</feature>
<feature type="helix" evidence="4">
    <location>
        <begin position="162"/>
        <end position="165"/>
    </location>
</feature>
<feature type="strand" evidence="4">
    <location>
        <begin position="166"/>
        <end position="169"/>
    </location>
</feature>
<feature type="strand" evidence="4">
    <location>
        <begin position="172"/>
        <end position="176"/>
    </location>
</feature>
<feature type="strand" evidence="4">
    <location>
        <begin position="180"/>
        <end position="183"/>
    </location>
</feature>
<feature type="turn" evidence="4">
    <location>
        <begin position="184"/>
        <end position="186"/>
    </location>
</feature>
<feature type="strand" evidence="4">
    <location>
        <begin position="189"/>
        <end position="195"/>
    </location>
</feature>
<feature type="helix" evidence="4">
    <location>
        <begin position="201"/>
        <end position="209"/>
    </location>
</feature>
<feature type="turn" evidence="4">
    <location>
        <begin position="220"/>
        <end position="223"/>
    </location>
</feature>
<feature type="strand" evidence="4">
    <location>
        <begin position="224"/>
        <end position="227"/>
    </location>
</feature>
<feature type="helix" evidence="4">
    <location>
        <begin position="238"/>
        <end position="242"/>
    </location>
</feature>
<feature type="helix" evidence="4">
    <location>
        <begin position="246"/>
        <end position="253"/>
    </location>
</feature>
<feature type="strand" evidence="5">
    <location>
        <begin position="254"/>
        <end position="256"/>
    </location>
</feature>
<feature type="helix" evidence="4">
    <location>
        <begin position="257"/>
        <end position="259"/>
    </location>
</feature>
<feature type="helix" evidence="4">
    <location>
        <begin position="264"/>
        <end position="277"/>
    </location>
</feature>
<feature type="turn" evidence="4">
    <location>
        <begin position="282"/>
        <end position="284"/>
    </location>
</feature>
<feature type="strand" evidence="5">
    <location>
        <begin position="285"/>
        <end position="287"/>
    </location>
</feature>
<feature type="strand" evidence="4">
    <location>
        <begin position="292"/>
        <end position="296"/>
    </location>
</feature>
<feature type="strand" evidence="4">
    <location>
        <begin position="302"/>
        <end position="305"/>
    </location>
</feature>
<evidence type="ECO:0000250" key="1">
    <source>
        <dbReference type="UniProtKB" id="Q28955"/>
    </source>
</evidence>
<evidence type="ECO:0000269" key="2">
    <source>
    </source>
</evidence>
<evidence type="ECO:0000305" key="3"/>
<evidence type="ECO:0007829" key="4">
    <source>
        <dbReference type="PDB" id="6A0E"/>
    </source>
</evidence>
<evidence type="ECO:0007829" key="5">
    <source>
        <dbReference type="PDB" id="6A0I"/>
    </source>
</evidence>
<comment type="function">
    <text evidence="2">N-terminal asparagine deamidase that mediates deamidation of N-terminal asparagine residues to aspartate. Required for the ubiquitin-dependent turnover of intracellular proteins that initiate with Met-Asn. These proteins are acetylated on the retained initiator methionine and can subsequently be modified by the removal of N-acetyl methionine by acylaminoacid hydrolase (AAH). Conversion of the resulting N-terminal asparagine to aspartate by NTAN1/PNAD renders the protein susceptible to arginylation, polyubiquitination and degradation as specified by the N-end rule. This enzyme does not act on substrates with internal or C-terminal asparagines and does not act on glutamine residues in any position, nor on acetylated N-terminal peptidyl Asn.</text>
</comment>
<comment type="catalytic activity">
    <reaction evidence="2">
        <text>N-terminal L-asparaginyl-[protein] + H2O + H(+) = N-terminal L-aspartyl-[protein] + NH4(+)</text>
        <dbReference type="Rhea" id="RHEA:50676"/>
        <dbReference type="Rhea" id="RHEA-COMP:12669"/>
        <dbReference type="Rhea" id="RHEA-COMP:12776"/>
        <dbReference type="ChEBI" id="CHEBI:15377"/>
        <dbReference type="ChEBI" id="CHEBI:15378"/>
        <dbReference type="ChEBI" id="CHEBI:28938"/>
        <dbReference type="ChEBI" id="CHEBI:50348"/>
        <dbReference type="ChEBI" id="CHEBI:64720"/>
        <dbReference type="EC" id="3.5.1.121"/>
    </reaction>
</comment>
<comment type="activity regulation">
    <text evidence="2">Inhibited by micromolar concentrations of copper and zinc ions.</text>
</comment>
<comment type="biophysicochemical properties">
    <phDependence>
        <text evidence="2">Optimum pH is 6.0-7.5.</text>
    </phDependence>
</comment>
<comment type="subunit">
    <text evidence="1">Monomer.</text>
</comment>
<comment type="interaction">
    <interactant intactId="EBI-12401218">
        <id>Q96AB6</id>
    </interactant>
    <interactant intactId="EBI-16439278">
        <id>Q6FHY5</id>
        <label>MEOX2</label>
    </interactant>
    <organismsDiffer>false</organismsDiffer>
    <experiments>3</experiments>
</comment>
<comment type="interaction">
    <interactant intactId="EBI-12401218">
        <id>Q96AB6</id>
    </interactant>
    <interactant intactId="EBI-358507">
        <id>Q13546</id>
        <label>RIPK1</label>
    </interactant>
    <organismsDiffer>false</organismsDiffer>
    <experiments>2</experiments>
</comment>
<comment type="subcellular location">
    <subcellularLocation>
        <location evidence="1">Cytoplasm</location>
    </subcellularLocation>
</comment>
<sequence>MPLLVEGRRVRLPQSAGDLVRAHPPLEERARLLRGQSVQQVGPQGLLYVQQRELAVTSPKDGSISILGSDDATTCHIVVLRHTGNGATCLTHCDGTDTKAEVPLIMNSIKSFSDHAQCGRLEVHLVGGFSDDRQLSQKLTHQLLSEFDRQEDDIHLVTLCVTELNDREENENHFPVIYGIAVNIKTAEIYRASFQDRGPEEQLRAARTLAGGPMISIYDAETEQLRIGPYSWTPFPHVDFWLHQDDKQILENLSTSPLAEPPHFVEHIRSTLMFLKKHPSPAHTLFSGNKALLYKKNEDGLWEKISSPGS</sequence>
<dbReference type="EC" id="3.5.1.121" evidence="2"/>
<dbReference type="EMBL" id="AF092440">
    <property type="protein sequence ID" value="AAP97215.1"/>
    <property type="molecule type" value="mRNA"/>
</dbReference>
<dbReference type="EMBL" id="BC017336">
    <property type="protein sequence ID" value="AAH17336.1"/>
    <property type="molecule type" value="mRNA"/>
</dbReference>
<dbReference type="CCDS" id="CCDS10558.1"/>
<dbReference type="RefSeq" id="NP_001257695.1">
    <property type="nucleotide sequence ID" value="NM_001270766.1"/>
</dbReference>
<dbReference type="RefSeq" id="NP_001257696.1">
    <property type="nucleotide sequence ID" value="NM_001270767.1"/>
</dbReference>
<dbReference type="RefSeq" id="NP_775745.1">
    <property type="nucleotide sequence ID" value="NM_173474.4"/>
</dbReference>
<dbReference type="PDB" id="6A0E">
    <property type="method" value="X-ray"/>
    <property type="resolution" value="1.95 A"/>
    <property type="chains" value="A/B=1-310"/>
</dbReference>
<dbReference type="PDB" id="6A0F">
    <property type="method" value="X-ray"/>
    <property type="resolution" value="2.38 A"/>
    <property type="chains" value="A/B=1-310"/>
</dbReference>
<dbReference type="PDB" id="6A0H">
    <property type="method" value="X-ray"/>
    <property type="resolution" value="3.19 A"/>
    <property type="chains" value="A/B=1-310"/>
</dbReference>
<dbReference type="PDB" id="6A0I">
    <property type="method" value="X-ray"/>
    <property type="resolution" value="2.00 A"/>
    <property type="chains" value="A/B=1-310"/>
</dbReference>
<dbReference type="PDBsum" id="6A0E"/>
<dbReference type="PDBsum" id="6A0F"/>
<dbReference type="PDBsum" id="6A0H"/>
<dbReference type="PDBsum" id="6A0I"/>
<dbReference type="SMR" id="Q96AB6"/>
<dbReference type="BioGRID" id="125835">
    <property type="interactions" value="13"/>
</dbReference>
<dbReference type="FunCoup" id="Q96AB6">
    <property type="interactions" value="2024"/>
</dbReference>
<dbReference type="IntAct" id="Q96AB6">
    <property type="interactions" value="3"/>
</dbReference>
<dbReference type="STRING" id="9606.ENSP00000287706"/>
<dbReference type="iPTMnet" id="Q96AB6"/>
<dbReference type="PhosphoSitePlus" id="Q96AB6"/>
<dbReference type="BioMuta" id="NTAN1"/>
<dbReference type="DMDM" id="37082118"/>
<dbReference type="jPOST" id="Q96AB6"/>
<dbReference type="MassIVE" id="Q96AB6"/>
<dbReference type="PaxDb" id="9606-ENSP00000287706"/>
<dbReference type="PeptideAtlas" id="Q96AB6"/>
<dbReference type="ProteomicsDB" id="75948"/>
<dbReference type="Pumba" id="Q96AB6"/>
<dbReference type="Antibodypedia" id="24973">
    <property type="antibodies" value="91 antibodies from 20 providers"/>
</dbReference>
<dbReference type="DNASU" id="123803"/>
<dbReference type="Ensembl" id="ENST00000287706.8">
    <property type="protein sequence ID" value="ENSP00000287706.3"/>
    <property type="gene ID" value="ENSG00000157045.9"/>
</dbReference>
<dbReference type="Ensembl" id="ENST00000620176.4">
    <property type="protein sequence ID" value="ENSP00000484380.1"/>
    <property type="gene ID" value="ENSG00000275779.4"/>
</dbReference>
<dbReference type="GeneID" id="123803"/>
<dbReference type="KEGG" id="hsa:123803"/>
<dbReference type="MANE-Select" id="ENST00000287706.8">
    <property type="protein sequence ID" value="ENSP00000287706.3"/>
    <property type="RefSeq nucleotide sequence ID" value="NM_173474.4"/>
    <property type="RefSeq protein sequence ID" value="NP_775745.1"/>
</dbReference>
<dbReference type="UCSC" id="uc002ddd.5">
    <property type="organism name" value="human"/>
</dbReference>
<dbReference type="AGR" id="HGNC:29909"/>
<dbReference type="CTD" id="123803"/>
<dbReference type="DisGeNET" id="123803"/>
<dbReference type="GeneCards" id="NTAN1"/>
<dbReference type="HGNC" id="HGNC:29909">
    <property type="gene designation" value="NTAN1"/>
</dbReference>
<dbReference type="HPA" id="ENSG00000157045">
    <property type="expression patterns" value="Low tissue specificity"/>
</dbReference>
<dbReference type="MIM" id="615367">
    <property type="type" value="gene"/>
</dbReference>
<dbReference type="neXtProt" id="NX_Q96AB6"/>
<dbReference type="OpenTargets" id="ENSG00000157045"/>
<dbReference type="PharmGKB" id="PA134863573"/>
<dbReference type="VEuPathDB" id="HostDB:ENSG00000157045"/>
<dbReference type="eggNOG" id="ENOG502QSQW">
    <property type="taxonomic scope" value="Eukaryota"/>
</dbReference>
<dbReference type="GeneTree" id="ENSGT00390000016730"/>
<dbReference type="HOGENOM" id="CLU_077981_1_0_1"/>
<dbReference type="InParanoid" id="Q96AB6"/>
<dbReference type="OMA" id="WRETFPM"/>
<dbReference type="OrthoDB" id="539995at2759"/>
<dbReference type="PAN-GO" id="Q96AB6">
    <property type="GO annotations" value="3 GO annotations based on evolutionary models"/>
</dbReference>
<dbReference type="PhylomeDB" id="Q96AB6"/>
<dbReference type="TreeFam" id="TF325597"/>
<dbReference type="BioCyc" id="MetaCyc:ENSG00000157045-MONOMER"/>
<dbReference type="BRENDA" id="3.5.1.121">
    <property type="organism ID" value="2681"/>
</dbReference>
<dbReference type="PathwayCommons" id="Q96AB6"/>
<dbReference type="SignaLink" id="Q96AB6"/>
<dbReference type="BioGRID-ORCS" id="123803">
    <property type="hits" value="12 hits in 1154 CRISPR screens"/>
</dbReference>
<dbReference type="ChiTaRS" id="NTAN1">
    <property type="organism name" value="human"/>
</dbReference>
<dbReference type="GenomeRNAi" id="123803"/>
<dbReference type="Pharos" id="Q96AB6">
    <property type="development level" value="Tbio"/>
</dbReference>
<dbReference type="PRO" id="PR:Q96AB6"/>
<dbReference type="Proteomes" id="UP000005640">
    <property type="component" value="Chromosome 16"/>
</dbReference>
<dbReference type="RNAct" id="Q96AB6">
    <property type="molecule type" value="protein"/>
</dbReference>
<dbReference type="Bgee" id="ENSG00000157045">
    <property type="expression patterns" value="Expressed in subcutaneous adipose tissue and 100 other cell types or tissues"/>
</dbReference>
<dbReference type="ExpressionAtlas" id="Q96AB6">
    <property type="expression patterns" value="baseline and differential"/>
</dbReference>
<dbReference type="GO" id="GO:0005737">
    <property type="term" value="C:cytoplasm"/>
    <property type="evidence" value="ECO:0007669"/>
    <property type="project" value="UniProtKB-SubCell"/>
</dbReference>
<dbReference type="GO" id="GO:0005634">
    <property type="term" value="C:nucleus"/>
    <property type="evidence" value="ECO:0000318"/>
    <property type="project" value="GO_Central"/>
</dbReference>
<dbReference type="GO" id="GO:0008418">
    <property type="term" value="F:protein-N-terminal asparagine amidohydrolase activity"/>
    <property type="evidence" value="ECO:0000314"/>
    <property type="project" value="UniProtKB"/>
</dbReference>
<dbReference type="GO" id="GO:0008344">
    <property type="term" value="P:adult locomotory behavior"/>
    <property type="evidence" value="ECO:0007669"/>
    <property type="project" value="Ensembl"/>
</dbReference>
<dbReference type="GO" id="GO:0007613">
    <property type="term" value="P:memory"/>
    <property type="evidence" value="ECO:0007669"/>
    <property type="project" value="Ensembl"/>
</dbReference>
<dbReference type="GO" id="GO:0006511">
    <property type="term" value="P:ubiquitin-dependent protein catabolic process"/>
    <property type="evidence" value="ECO:0000314"/>
    <property type="project" value="UniProtKB"/>
</dbReference>
<dbReference type="InterPro" id="IPR026750">
    <property type="entry name" value="NTAN1"/>
</dbReference>
<dbReference type="PANTHER" id="PTHR12498">
    <property type="entry name" value="N-TERMINAL ASPARAGINE AMIDOHYDROLASE"/>
    <property type="match status" value="1"/>
</dbReference>
<dbReference type="PANTHER" id="PTHR12498:SF0">
    <property type="entry name" value="PROTEIN N-TERMINAL ASPARAGINE AMIDOHYDROLASE"/>
    <property type="match status" value="1"/>
</dbReference>
<dbReference type="Pfam" id="PF14736">
    <property type="entry name" value="N_Asn_amidohyd"/>
    <property type="match status" value="1"/>
</dbReference>
<organism>
    <name type="scientific">Homo sapiens</name>
    <name type="common">Human</name>
    <dbReference type="NCBI Taxonomy" id="9606"/>
    <lineage>
        <taxon>Eukaryota</taxon>
        <taxon>Metazoa</taxon>
        <taxon>Chordata</taxon>
        <taxon>Craniata</taxon>
        <taxon>Vertebrata</taxon>
        <taxon>Euteleostomi</taxon>
        <taxon>Mammalia</taxon>
        <taxon>Eutheria</taxon>
        <taxon>Euarchontoglires</taxon>
        <taxon>Primates</taxon>
        <taxon>Haplorrhini</taxon>
        <taxon>Catarrhini</taxon>
        <taxon>Hominidae</taxon>
        <taxon>Homo</taxon>
    </lineage>
</organism>
<name>NTAN1_HUMAN</name>
<gene>
    <name type="primary">NTAN1</name>
</gene>
<protein>
    <recommendedName>
        <fullName>Protein N-terminal asparagine amidohydrolase</fullName>
        <ecNumber evidence="2">3.5.1.121</ecNumber>
    </recommendedName>
    <alternativeName>
        <fullName>Protein NH2-terminal asparagine amidohydrolase</fullName>
        <shortName>PNAA</shortName>
    </alternativeName>
    <alternativeName>
        <fullName>Protein NH2-terminal asparagine deamidase</fullName>
        <shortName>PNAD</shortName>
        <shortName>Protein N-terminal Asn amidase</shortName>
        <shortName>Protein N-terminal asparagine amidase</shortName>
        <shortName>Protein NTN-amidase</shortName>
    </alternativeName>
</protein>
<accession>Q96AB6</accession>
<accession>Q7Z4Z0</accession>
<keyword id="KW-0002">3D-structure</keyword>
<keyword id="KW-0963">Cytoplasm</keyword>
<keyword id="KW-0378">Hydrolase</keyword>
<keyword id="KW-1267">Proteomics identification</keyword>
<keyword id="KW-1185">Reference proteome</keyword>